<protein>
    <recommendedName>
        <fullName evidence="1">Translation initiation factor IF-1</fullName>
    </recommendedName>
</protein>
<dbReference type="EMBL" id="CP000896">
    <property type="protein sequence ID" value="ABX80736.1"/>
    <property type="molecule type" value="Genomic_DNA"/>
</dbReference>
<dbReference type="RefSeq" id="WP_012242067.1">
    <property type="nucleotide sequence ID" value="NC_010163.1"/>
</dbReference>
<dbReference type="SMR" id="A9NEF6"/>
<dbReference type="STRING" id="441768.ACL_0110"/>
<dbReference type="GeneID" id="41338312"/>
<dbReference type="KEGG" id="acl:ACL_0110"/>
<dbReference type="eggNOG" id="COG0361">
    <property type="taxonomic scope" value="Bacteria"/>
</dbReference>
<dbReference type="HOGENOM" id="CLU_151267_1_0_14"/>
<dbReference type="OrthoDB" id="9803250at2"/>
<dbReference type="Proteomes" id="UP000008558">
    <property type="component" value="Chromosome"/>
</dbReference>
<dbReference type="GO" id="GO:0005829">
    <property type="term" value="C:cytosol"/>
    <property type="evidence" value="ECO:0007669"/>
    <property type="project" value="TreeGrafter"/>
</dbReference>
<dbReference type="GO" id="GO:0043022">
    <property type="term" value="F:ribosome binding"/>
    <property type="evidence" value="ECO:0007669"/>
    <property type="project" value="UniProtKB-UniRule"/>
</dbReference>
<dbReference type="GO" id="GO:0019843">
    <property type="term" value="F:rRNA binding"/>
    <property type="evidence" value="ECO:0007669"/>
    <property type="project" value="UniProtKB-UniRule"/>
</dbReference>
<dbReference type="GO" id="GO:0003743">
    <property type="term" value="F:translation initiation factor activity"/>
    <property type="evidence" value="ECO:0007669"/>
    <property type="project" value="UniProtKB-UniRule"/>
</dbReference>
<dbReference type="CDD" id="cd04451">
    <property type="entry name" value="S1_IF1"/>
    <property type="match status" value="1"/>
</dbReference>
<dbReference type="FunFam" id="2.40.50.140:FF:000002">
    <property type="entry name" value="Translation initiation factor IF-1"/>
    <property type="match status" value="1"/>
</dbReference>
<dbReference type="Gene3D" id="2.40.50.140">
    <property type="entry name" value="Nucleic acid-binding proteins"/>
    <property type="match status" value="1"/>
</dbReference>
<dbReference type="HAMAP" id="MF_00075">
    <property type="entry name" value="IF_1"/>
    <property type="match status" value="1"/>
</dbReference>
<dbReference type="InterPro" id="IPR012340">
    <property type="entry name" value="NA-bd_OB-fold"/>
</dbReference>
<dbReference type="InterPro" id="IPR006196">
    <property type="entry name" value="RNA-binding_domain_S1_IF1"/>
</dbReference>
<dbReference type="InterPro" id="IPR003029">
    <property type="entry name" value="S1_domain"/>
</dbReference>
<dbReference type="InterPro" id="IPR004368">
    <property type="entry name" value="TIF_IF1"/>
</dbReference>
<dbReference type="NCBIfam" id="TIGR00008">
    <property type="entry name" value="infA"/>
    <property type="match status" value="1"/>
</dbReference>
<dbReference type="PANTHER" id="PTHR33370">
    <property type="entry name" value="TRANSLATION INITIATION FACTOR IF-1, CHLOROPLASTIC"/>
    <property type="match status" value="1"/>
</dbReference>
<dbReference type="PANTHER" id="PTHR33370:SF1">
    <property type="entry name" value="TRANSLATION INITIATION FACTOR IF-1, CHLOROPLASTIC"/>
    <property type="match status" value="1"/>
</dbReference>
<dbReference type="Pfam" id="PF01176">
    <property type="entry name" value="eIF-1a"/>
    <property type="match status" value="1"/>
</dbReference>
<dbReference type="SMART" id="SM00316">
    <property type="entry name" value="S1"/>
    <property type="match status" value="1"/>
</dbReference>
<dbReference type="SUPFAM" id="SSF50249">
    <property type="entry name" value="Nucleic acid-binding proteins"/>
    <property type="match status" value="1"/>
</dbReference>
<dbReference type="PROSITE" id="PS50832">
    <property type="entry name" value="S1_IF1_TYPE"/>
    <property type="match status" value="1"/>
</dbReference>
<feature type="chain" id="PRO_0000338742" description="Translation initiation factor IF-1">
    <location>
        <begin position="1"/>
        <end position="72"/>
    </location>
</feature>
<feature type="domain" description="S1-like" evidence="1">
    <location>
        <begin position="1"/>
        <end position="72"/>
    </location>
</feature>
<comment type="function">
    <text evidence="1">One of the essential components for the initiation of protein synthesis. Stabilizes the binding of IF-2 and IF-3 on the 30S subunit to which N-formylmethionyl-tRNA(fMet) subsequently binds. Helps modulate mRNA selection, yielding the 30S pre-initiation complex (PIC). Upon addition of the 50S ribosomal subunit IF-1, IF-2 and IF-3 are released leaving the mature 70S translation initiation complex.</text>
</comment>
<comment type="subunit">
    <text evidence="1">Component of the 30S ribosomal translation pre-initiation complex which assembles on the 30S ribosome in the order IF-2 and IF-3, IF-1 and N-formylmethionyl-tRNA(fMet); mRNA recruitment can occur at any time during PIC assembly.</text>
</comment>
<comment type="subcellular location">
    <subcellularLocation>
        <location evidence="1">Cytoplasm</location>
    </subcellularLocation>
</comment>
<comment type="similarity">
    <text evidence="1">Belongs to the IF-1 family.</text>
</comment>
<gene>
    <name evidence="1" type="primary">infA</name>
    <name type="ordered locus">ACL_0110</name>
</gene>
<name>IF1_ACHLI</name>
<reference key="1">
    <citation type="journal article" date="2011" name="J. Bacteriol.">
        <title>Complete genome and proteome of Acholeplasma laidlawii.</title>
        <authorList>
            <person name="Lazarev V.N."/>
            <person name="Levitskii S.A."/>
            <person name="Basovskii Y.I."/>
            <person name="Chukin M.M."/>
            <person name="Akopian T.A."/>
            <person name="Vereshchagin V.V."/>
            <person name="Kostrjukova E.S."/>
            <person name="Kovaleva G.Y."/>
            <person name="Kazanov M.D."/>
            <person name="Malko D.B."/>
            <person name="Vitreschak A.G."/>
            <person name="Sernova N.V."/>
            <person name="Gelfand M.S."/>
            <person name="Demina I.A."/>
            <person name="Serebryakova M.V."/>
            <person name="Galyamina M.A."/>
            <person name="Vtyurin N.N."/>
            <person name="Rogov S.I."/>
            <person name="Alexeev D.G."/>
            <person name="Ladygina V.G."/>
            <person name="Govorun V.M."/>
        </authorList>
    </citation>
    <scope>NUCLEOTIDE SEQUENCE [LARGE SCALE GENOMIC DNA]</scope>
    <source>
        <strain>PG-8A</strain>
    </source>
</reference>
<sequence>MAREDLIEVEAKVKEILPNTKFIVELDNGHTVVAHVSGKIRIHNIRILPGDKVTVELSPYDLSRGRITYRKK</sequence>
<accession>A9NEF6</accession>
<organism>
    <name type="scientific">Acholeplasma laidlawii (strain PG-8A)</name>
    <dbReference type="NCBI Taxonomy" id="441768"/>
    <lineage>
        <taxon>Bacteria</taxon>
        <taxon>Bacillati</taxon>
        <taxon>Mycoplasmatota</taxon>
        <taxon>Mollicutes</taxon>
        <taxon>Acholeplasmatales</taxon>
        <taxon>Acholeplasmataceae</taxon>
        <taxon>Acholeplasma</taxon>
    </lineage>
</organism>
<proteinExistence type="inferred from homology"/>
<evidence type="ECO:0000255" key="1">
    <source>
        <dbReference type="HAMAP-Rule" id="MF_00075"/>
    </source>
</evidence>
<keyword id="KW-0963">Cytoplasm</keyword>
<keyword id="KW-0396">Initiation factor</keyword>
<keyword id="KW-0648">Protein biosynthesis</keyword>
<keyword id="KW-1185">Reference proteome</keyword>
<keyword id="KW-0694">RNA-binding</keyword>
<keyword id="KW-0699">rRNA-binding</keyword>